<sequence length="201" mass="23226">MARYTGPATRKSRRLKVDLVGGDQAFERRPYPPGQHGRARIKETEYLLQLQEKQKAKFTYGVLERQFRSYYEEANRRPGKTGDNLLQVLECRLDNVVYRAGLARTRRMARQLVSHGHFTVNGKKVNIPSYQVSKWDIIDVKQKSLGTTPFIIAKETIGERPVPAWLQVVPSNLRILVHQRPERAQIDTPVTEQLIVELYSK</sequence>
<protein>
    <recommendedName>
        <fullName evidence="1">Small ribosomal subunit protein uS4</fullName>
    </recommendedName>
    <alternativeName>
        <fullName evidence="2">30S ribosomal protein S4</fullName>
    </alternativeName>
</protein>
<organism>
    <name type="scientific">Saccharopolyspora erythraea (strain ATCC 11635 / DSM 40517 / JCM 4748 / NBRC 13426 / NCIMB 8594 / NRRL 2338)</name>
    <dbReference type="NCBI Taxonomy" id="405948"/>
    <lineage>
        <taxon>Bacteria</taxon>
        <taxon>Bacillati</taxon>
        <taxon>Actinomycetota</taxon>
        <taxon>Actinomycetes</taxon>
        <taxon>Pseudonocardiales</taxon>
        <taxon>Pseudonocardiaceae</taxon>
        <taxon>Saccharopolyspora</taxon>
    </lineage>
</organism>
<evidence type="ECO:0000255" key="1">
    <source>
        <dbReference type="HAMAP-Rule" id="MF_01306"/>
    </source>
</evidence>
<evidence type="ECO:0000305" key="2"/>
<keyword id="KW-1185">Reference proteome</keyword>
<keyword id="KW-0687">Ribonucleoprotein</keyword>
<keyword id="KW-0689">Ribosomal protein</keyword>
<keyword id="KW-0694">RNA-binding</keyword>
<keyword id="KW-0699">rRNA-binding</keyword>
<accession>A4FPJ3</accession>
<proteinExistence type="inferred from homology"/>
<name>RS4_SACEN</name>
<dbReference type="EMBL" id="AM420293">
    <property type="protein sequence ID" value="CAM05968.1"/>
    <property type="molecule type" value="Genomic_DNA"/>
</dbReference>
<dbReference type="RefSeq" id="WP_009948669.1">
    <property type="nucleotide sequence ID" value="NC_009142.1"/>
</dbReference>
<dbReference type="SMR" id="A4FPJ3"/>
<dbReference type="STRING" id="405948.SACE_6804"/>
<dbReference type="KEGG" id="sen:SACE_6804"/>
<dbReference type="eggNOG" id="COG0522">
    <property type="taxonomic scope" value="Bacteria"/>
</dbReference>
<dbReference type="HOGENOM" id="CLU_092403_0_2_11"/>
<dbReference type="OrthoDB" id="9803672at2"/>
<dbReference type="Proteomes" id="UP000006728">
    <property type="component" value="Chromosome"/>
</dbReference>
<dbReference type="GO" id="GO:0015935">
    <property type="term" value="C:small ribosomal subunit"/>
    <property type="evidence" value="ECO:0007669"/>
    <property type="project" value="InterPro"/>
</dbReference>
<dbReference type="GO" id="GO:0019843">
    <property type="term" value="F:rRNA binding"/>
    <property type="evidence" value="ECO:0007669"/>
    <property type="project" value="UniProtKB-UniRule"/>
</dbReference>
<dbReference type="GO" id="GO:0003735">
    <property type="term" value="F:structural constituent of ribosome"/>
    <property type="evidence" value="ECO:0007669"/>
    <property type="project" value="InterPro"/>
</dbReference>
<dbReference type="GO" id="GO:0042274">
    <property type="term" value="P:ribosomal small subunit biogenesis"/>
    <property type="evidence" value="ECO:0007669"/>
    <property type="project" value="TreeGrafter"/>
</dbReference>
<dbReference type="GO" id="GO:0006412">
    <property type="term" value="P:translation"/>
    <property type="evidence" value="ECO:0007669"/>
    <property type="project" value="UniProtKB-UniRule"/>
</dbReference>
<dbReference type="CDD" id="cd00165">
    <property type="entry name" value="S4"/>
    <property type="match status" value="1"/>
</dbReference>
<dbReference type="FunFam" id="3.10.290.10:FF:000001">
    <property type="entry name" value="30S ribosomal protein S4"/>
    <property type="match status" value="1"/>
</dbReference>
<dbReference type="Gene3D" id="1.10.1050.10">
    <property type="entry name" value="Ribosomal Protein S4 Delta 41, Chain A, domain 1"/>
    <property type="match status" value="1"/>
</dbReference>
<dbReference type="Gene3D" id="3.10.290.10">
    <property type="entry name" value="RNA-binding S4 domain"/>
    <property type="match status" value="1"/>
</dbReference>
<dbReference type="HAMAP" id="MF_01306_B">
    <property type="entry name" value="Ribosomal_uS4_B"/>
    <property type="match status" value="1"/>
</dbReference>
<dbReference type="InterPro" id="IPR022801">
    <property type="entry name" value="Ribosomal_uS4"/>
</dbReference>
<dbReference type="InterPro" id="IPR005709">
    <property type="entry name" value="Ribosomal_uS4_bac-type"/>
</dbReference>
<dbReference type="InterPro" id="IPR018079">
    <property type="entry name" value="Ribosomal_uS4_CS"/>
</dbReference>
<dbReference type="InterPro" id="IPR001912">
    <property type="entry name" value="Ribosomal_uS4_N"/>
</dbReference>
<dbReference type="InterPro" id="IPR002942">
    <property type="entry name" value="S4_RNA-bd"/>
</dbReference>
<dbReference type="InterPro" id="IPR036986">
    <property type="entry name" value="S4_RNA-bd_sf"/>
</dbReference>
<dbReference type="NCBIfam" id="NF003717">
    <property type="entry name" value="PRK05327.1"/>
    <property type="match status" value="1"/>
</dbReference>
<dbReference type="NCBIfam" id="TIGR01017">
    <property type="entry name" value="rpsD_bact"/>
    <property type="match status" value="1"/>
</dbReference>
<dbReference type="PANTHER" id="PTHR11831">
    <property type="entry name" value="30S 40S RIBOSOMAL PROTEIN"/>
    <property type="match status" value="1"/>
</dbReference>
<dbReference type="PANTHER" id="PTHR11831:SF4">
    <property type="entry name" value="SMALL RIBOSOMAL SUBUNIT PROTEIN US4M"/>
    <property type="match status" value="1"/>
</dbReference>
<dbReference type="Pfam" id="PF00163">
    <property type="entry name" value="Ribosomal_S4"/>
    <property type="match status" value="1"/>
</dbReference>
<dbReference type="Pfam" id="PF01479">
    <property type="entry name" value="S4"/>
    <property type="match status" value="1"/>
</dbReference>
<dbReference type="SMART" id="SM01390">
    <property type="entry name" value="Ribosomal_S4"/>
    <property type="match status" value="1"/>
</dbReference>
<dbReference type="SMART" id="SM00363">
    <property type="entry name" value="S4"/>
    <property type="match status" value="1"/>
</dbReference>
<dbReference type="SUPFAM" id="SSF55174">
    <property type="entry name" value="Alpha-L RNA-binding motif"/>
    <property type="match status" value="1"/>
</dbReference>
<dbReference type="PROSITE" id="PS00632">
    <property type="entry name" value="RIBOSOMAL_S4"/>
    <property type="match status" value="1"/>
</dbReference>
<dbReference type="PROSITE" id="PS50889">
    <property type="entry name" value="S4"/>
    <property type="match status" value="1"/>
</dbReference>
<reference key="1">
    <citation type="journal article" date="2007" name="Nat. Biotechnol.">
        <title>Complete genome sequence of the erythromycin-producing bacterium Saccharopolyspora erythraea NRRL23338.</title>
        <authorList>
            <person name="Oliynyk M."/>
            <person name="Samborskyy M."/>
            <person name="Lester J.B."/>
            <person name="Mironenko T."/>
            <person name="Scott N."/>
            <person name="Dickens S."/>
            <person name="Haydock S.F."/>
            <person name="Leadlay P.F."/>
        </authorList>
    </citation>
    <scope>NUCLEOTIDE SEQUENCE [LARGE SCALE GENOMIC DNA]</scope>
    <source>
        <strain>ATCC 11635 / DSM 40517 / JCM 4748 / NBRC 13426 / NCIMB 8594 / NRRL 2338</strain>
    </source>
</reference>
<gene>
    <name evidence="1" type="primary">rpsD</name>
    <name type="ordered locus">SACE_6804</name>
</gene>
<comment type="function">
    <text evidence="1">One of the primary rRNA binding proteins, it binds directly to 16S rRNA where it nucleates assembly of the body of the 30S subunit.</text>
</comment>
<comment type="function">
    <text evidence="1">With S5 and S12 plays an important role in translational accuracy.</text>
</comment>
<comment type="subunit">
    <text evidence="1">Part of the 30S ribosomal subunit. Contacts protein S5. The interaction surface between S4 and S5 is involved in control of translational fidelity.</text>
</comment>
<comment type="similarity">
    <text evidence="1">Belongs to the universal ribosomal protein uS4 family.</text>
</comment>
<feature type="chain" id="PRO_0000293360" description="Small ribosomal subunit protein uS4">
    <location>
        <begin position="1"/>
        <end position="201"/>
    </location>
</feature>
<feature type="domain" description="S4 RNA-binding" evidence="1">
    <location>
        <begin position="91"/>
        <end position="157"/>
    </location>
</feature>